<evidence type="ECO:0000255" key="1">
    <source>
        <dbReference type="HAMAP-Rule" id="MF_00160"/>
    </source>
</evidence>
<proteinExistence type="inferred from homology"/>
<gene>
    <name evidence="1" type="primary">serC</name>
    <name type="ordered locus">YPTS_1515</name>
</gene>
<protein>
    <recommendedName>
        <fullName evidence="1">Phosphoserine aminotransferase</fullName>
        <ecNumber evidence="1">2.6.1.52</ecNumber>
    </recommendedName>
    <alternativeName>
        <fullName evidence="1">Phosphohydroxythreonine aminotransferase</fullName>
        <shortName evidence="1">PSAT</shortName>
    </alternativeName>
</protein>
<reference key="1">
    <citation type="submission" date="2008-04" db="EMBL/GenBank/DDBJ databases">
        <title>Complete sequence of Yersinia pseudotuberculosis PB1/+.</title>
        <authorList>
            <person name="Copeland A."/>
            <person name="Lucas S."/>
            <person name="Lapidus A."/>
            <person name="Glavina del Rio T."/>
            <person name="Dalin E."/>
            <person name="Tice H."/>
            <person name="Bruce D."/>
            <person name="Goodwin L."/>
            <person name="Pitluck S."/>
            <person name="Munk A.C."/>
            <person name="Brettin T."/>
            <person name="Detter J.C."/>
            <person name="Han C."/>
            <person name="Tapia R."/>
            <person name="Schmutz J."/>
            <person name="Larimer F."/>
            <person name="Land M."/>
            <person name="Hauser L."/>
            <person name="Challacombe J.F."/>
            <person name="Green L."/>
            <person name="Lindler L.E."/>
            <person name="Nikolich M.P."/>
            <person name="Richardson P."/>
        </authorList>
    </citation>
    <scope>NUCLEOTIDE SEQUENCE [LARGE SCALE GENOMIC DNA]</scope>
    <source>
        <strain>PB1/+</strain>
    </source>
</reference>
<keyword id="KW-0028">Amino-acid biosynthesis</keyword>
<keyword id="KW-0032">Aminotransferase</keyword>
<keyword id="KW-0963">Cytoplasm</keyword>
<keyword id="KW-0663">Pyridoxal phosphate</keyword>
<keyword id="KW-0664">Pyridoxine biosynthesis</keyword>
<keyword id="KW-0718">Serine biosynthesis</keyword>
<keyword id="KW-0808">Transferase</keyword>
<sequence length="361" mass="39991">MTQVYNFSAGPAMLPVEVLRRAEQELRNWHGLGTSVMEISHRSKEFMQVAEESEKDLRDLLQIPANYKVLFCHGGARAQFAAVPLNLLGDSNSADYIDGGYWAHSAVKEAQKYCTPHVIDVTTHDNGLTGIQPMKQWKLSDNAAYVHYCPNETIDGVAINEQPDFGNKVVVADYSSAILSRPIDISRYGVIYAGAQKNIGPAGLTLVIVREDLLGKAHTALPSILDYKVLADNDSMFNTPPTFAWYLSGLVFKWLKEQGGLGEMEKRNQAKAELLYGAIDRTGFYRNQVAIANRSWMNVPFQMAEASLDKLFLSEAEAQGLQALKGHRVAGGMRASIYNAMPIEGVKALTDFMADFERRHG</sequence>
<accession>B2KA22</accession>
<comment type="function">
    <text evidence="1">Catalyzes the reversible conversion of 3-phosphohydroxypyruvate to phosphoserine and of 3-hydroxy-2-oxo-4-phosphonooxybutanoate to phosphohydroxythreonine.</text>
</comment>
<comment type="catalytic activity">
    <reaction evidence="1">
        <text>O-phospho-L-serine + 2-oxoglutarate = 3-phosphooxypyruvate + L-glutamate</text>
        <dbReference type="Rhea" id="RHEA:14329"/>
        <dbReference type="ChEBI" id="CHEBI:16810"/>
        <dbReference type="ChEBI" id="CHEBI:18110"/>
        <dbReference type="ChEBI" id="CHEBI:29985"/>
        <dbReference type="ChEBI" id="CHEBI:57524"/>
        <dbReference type="EC" id="2.6.1.52"/>
    </reaction>
</comment>
<comment type="catalytic activity">
    <reaction evidence="1">
        <text>4-(phosphooxy)-L-threonine + 2-oxoglutarate = (R)-3-hydroxy-2-oxo-4-phosphooxybutanoate + L-glutamate</text>
        <dbReference type="Rhea" id="RHEA:16573"/>
        <dbReference type="ChEBI" id="CHEBI:16810"/>
        <dbReference type="ChEBI" id="CHEBI:29985"/>
        <dbReference type="ChEBI" id="CHEBI:58452"/>
        <dbReference type="ChEBI" id="CHEBI:58538"/>
        <dbReference type="EC" id="2.6.1.52"/>
    </reaction>
</comment>
<comment type="cofactor">
    <cofactor evidence="1">
        <name>pyridoxal 5'-phosphate</name>
        <dbReference type="ChEBI" id="CHEBI:597326"/>
    </cofactor>
    <text evidence="1">Binds 1 pyridoxal phosphate per subunit.</text>
</comment>
<comment type="pathway">
    <text evidence="1">Amino-acid biosynthesis; L-serine biosynthesis; L-serine from 3-phospho-D-glycerate: step 2/3.</text>
</comment>
<comment type="pathway">
    <text evidence="1">Cofactor biosynthesis; pyridoxine 5'-phosphate biosynthesis; pyridoxine 5'-phosphate from D-erythrose 4-phosphate: step 3/5.</text>
</comment>
<comment type="subunit">
    <text evidence="1">Homodimer.</text>
</comment>
<comment type="subcellular location">
    <subcellularLocation>
        <location evidence="1">Cytoplasm</location>
    </subcellularLocation>
</comment>
<comment type="similarity">
    <text evidence="1">Belongs to the class-V pyridoxal-phosphate-dependent aminotransferase family. SerC subfamily.</text>
</comment>
<feature type="chain" id="PRO_1000203587" description="Phosphoserine aminotransferase">
    <location>
        <begin position="1"/>
        <end position="361"/>
    </location>
</feature>
<feature type="binding site" evidence="1">
    <location>
        <position position="42"/>
    </location>
    <ligand>
        <name>L-glutamate</name>
        <dbReference type="ChEBI" id="CHEBI:29985"/>
    </ligand>
</feature>
<feature type="binding site" evidence="1">
    <location>
        <begin position="76"/>
        <end position="77"/>
    </location>
    <ligand>
        <name>pyridoxal 5'-phosphate</name>
        <dbReference type="ChEBI" id="CHEBI:597326"/>
    </ligand>
</feature>
<feature type="binding site" evidence="1">
    <location>
        <position position="102"/>
    </location>
    <ligand>
        <name>pyridoxal 5'-phosphate</name>
        <dbReference type="ChEBI" id="CHEBI:597326"/>
    </ligand>
</feature>
<feature type="binding site" evidence="1">
    <location>
        <position position="153"/>
    </location>
    <ligand>
        <name>pyridoxal 5'-phosphate</name>
        <dbReference type="ChEBI" id="CHEBI:597326"/>
    </ligand>
</feature>
<feature type="binding site" evidence="1">
    <location>
        <position position="173"/>
    </location>
    <ligand>
        <name>pyridoxal 5'-phosphate</name>
        <dbReference type="ChEBI" id="CHEBI:597326"/>
    </ligand>
</feature>
<feature type="binding site" evidence="1">
    <location>
        <position position="196"/>
    </location>
    <ligand>
        <name>pyridoxal 5'-phosphate</name>
        <dbReference type="ChEBI" id="CHEBI:597326"/>
    </ligand>
</feature>
<feature type="binding site" evidence="1">
    <location>
        <begin position="238"/>
        <end position="239"/>
    </location>
    <ligand>
        <name>pyridoxal 5'-phosphate</name>
        <dbReference type="ChEBI" id="CHEBI:597326"/>
    </ligand>
</feature>
<feature type="modified residue" description="N6-(pyridoxal phosphate)lysine" evidence="1">
    <location>
        <position position="197"/>
    </location>
</feature>
<dbReference type="EC" id="2.6.1.52" evidence="1"/>
<dbReference type="EMBL" id="CP001048">
    <property type="protein sequence ID" value="ACC88487.1"/>
    <property type="molecule type" value="Genomic_DNA"/>
</dbReference>
<dbReference type="RefSeq" id="WP_011192055.1">
    <property type="nucleotide sequence ID" value="NZ_CP009780.1"/>
</dbReference>
<dbReference type="SMR" id="B2KA22"/>
<dbReference type="KEGG" id="ypb:YPTS_1515"/>
<dbReference type="PATRIC" id="fig|502801.10.peg.880"/>
<dbReference type="UniPathway" id="UPA00135">
    <property type="reaction ID" value="UER00197"/>
</dbReference>
<dbReference type="UniPathway" id="UPA00244">
    <property type="reaction ID" value="UER00311"/>
</dbReference>
<dbReference type="GO" id="GO:0005737">
    <property type="term" value="C:cytoplasm"/>
    <property type="evidence" value="ECO:0007669"/>
    <property type="project" value="UniProtKB-SubCell"/>
</dbReference>
<dbReference type="GO" id="GO:0004648">
    <property type="term" value="F:O-phospho-L-serine:2-oxoglutarate aminotransferase activity"/>
    <property type="evidence" value="ECO:0007669"/>
    <property type="project" value="UniProtKB-UniRule"/>
</dbReference>
<dbReference type="GO" id="GO:0030170">
    <property type="term" value="F:pyridoxal phosphate binding"/>
    <property type="evidence" value="ECO:0007669"/>
    <property type="project" value="UniProtKB-UniRule"/>
</dbReference>
<dbReference type="GO" id="GO:0006564">
    <property type="term" value="P:L-serine biosynthetic process"/>
    <property type="evidence" value="ECO:0007669"/>
    <property type="project" value="UniProtKB-UniRule"/>
</dbReference>
<dbReference type="GO" id="GO:0008615">
    <property type="term" value="P:pyridoxine biosynthetic process"/>
    <property type="evidence" value="ECO:0007669"/>
    <property type="project" value="UniProtKB-UniRule"/>
</dbReference>
<dbReference type="CDD" id="cd00611">
    <property type="entry name" value="PSAT_like"/>
    <property type="match status" value="1"/>
</dbReference>
<dbReference type="FunFam" id="3.40.640.10:FF:000010">
    <property type="entry name" value="Phosphoserine aminotransferase"/>
    <property type="match status" value="1"/>
</dbReference>
<dbReference type="FunFam" id="3.90.1150.10:FF:000006">
    <property type="entry name" value="Phosphoserine aminotransferase"/>
    <property type="match status" value="1"/>
</dbReference>
<dbReference type="Gene3D" id="3.90.1150.10">
    <property type="entry name" value="Aspartate Aminotransferase, domain 1"/>
    <property type="match status" value="1"/>
</dbReference>
<dbReference type="Gene3D" id="3.40.640.10">
    <property type="entry name" value="Type I PLP-dependent aspartate aminotransferase-like (Major domain)"/>
    <property type="match status" value="1"/>
</dbReference>
<dbReference type="HAMAP" id="MF_00160">
    <property type="entry name" value="SerC_aminotrans_5"/>
    <property type="match status" value="1"/>
</dbReference>
<dbReference type="InterPro" id="IPR000192">
    <property type="entry name" value="Aminotrans_V_dom"/>
</dbReference>
<dbReference type="InterPro" id="IPR020578">
    <property type="entry name" value="Aminotrans_V_PyrdxlP_BS"/>
</dbReference>
<dbReference type="InterPro" id="IPR022278">
    <property type="entry name" value="Pser_aminoTfrase"/>
</dbReference>
<dbReference type="InterPro" id="IPR015424">
    <property type="entry name" value="PyrdxlP-dep_Trfase"/>
</dbReference>
<dbReference type="InterPro" id="IPR015421">
    <property type="entry name" value="PyrdxlP-dep_Trfase_major"/>
</dbReference>
<dbReference type="InterPro" id="IPR015422">
    <property type="entry name" value="PyrdxlP-dep_Trfase_small"/>
</dbReference>
<dbReference type="NCBIfam" id="NF003764">
    <property type="entry name" value="PRK05355.1"/>
    <property type="match status" value="1"/>
</dbReference>
<dbReference type="NCBIfam" id="TIGR01364">
    <property type="entry name" value="serC_1"/>
    <property type="match status" value="1"/>
</dbReference>
<dbReference type="PANTHER" id="PTHR43247">
    <property type="entry name" value="PHOSPHOSERINE AMINOTRANSFERASE"/>
    <property type="match status" value="1"/>
</dbReference>
<dbReference type="PANTHER" id="PTHR43247:SF1">
    <property type="entry name" value="PHOSPHOSERINE AMINOTRANSFERASE"/>
    <property type="match status" value="1"/>
</dbReference>
<dbReference type="Pfam" id="PF00266">
    <property type="entry name" value="Aminotran_5"/>
    <property type="match status" value="1"/>
</dbReference>
<dbReference type="PIRSF" id="PIRSF000525">
    <property type="entry name" value="SerC"/>
    <property type="match status" value="1"/>
</dbReference>
<dbReference type="SUPFAM" id="SSF53383">
    <property type="entry name" value="PLP-dependent transferases"/>
    <property type="match status" value="1"/>
</dbReference>
<dbReference type="PROSITE" id="PS00595">
    <property type="entry name" value="AA_TRANSFER_CLASS_5"/>
    <property type="match status" value="1"/>
</dbReference>
<name>SERC_YERPB</name>
<organism>
    <name type="scientific">Yersinia pseudotuberculosis serotype IB (strain PB1/+)</name>
    <dbReference type="NCBI Taxonomy" id="502801"/>
    <lineage>
        <taxon>Bacteria</taxon>
        <taxon>Pseudomonadati</taxon>
        <taxon>Pseudomonadota</taxon>
        <taxon>Gammaproteobacteria</taxon>
        <taxon>Enterobacterales</taxon>
        <taxon>Yersiniaceae</taxon>
        <taxon>Yersinia</taxon>
    </lineage>
</organism>